<accession>P51120</accession>
<proteinExistence type="inferred from homology"/>
<name>GLN1B_TRITH</name>
<feature type="chain" id="PRO_0000153218" description="Glutamine synthetase">
    <location>
        <begin position="1" status="less than"/>
        <end position="119" status="greater than"/>
    </location>
</feature>
<feature type="domain" description="GS catalytic" evidence="6">
    <location>
        <begin position="1"/>
        <end position="119"/>
    </location>
</feature>
<feature type="binding site" evidence="3">
    <location>
        <position position="3"/>
    </location>
    <ligand>
        <name>ATP</name>
        <dbReference type="ChEBI" id="CHEBI:30616"/>
    </ligand>
</feature>
<feature type="binding site" evidence="3">
    <location>
        <position position="8"/>
    </location>
    <ligand>
        <name>Mg(2+)</name>
        <dbReference type="ChEBI" id="CHEBI:18420"/>
        <label>2</label>
    </ligand>
</feature>
<feature type="binding site" evidence="3">
    <location>
        <position position="16"/>
    </location>
    <ligand>
        <name>Mg(2+)</name>
        <dbReference type="ChEBI" id="CHEBI:18420"/>
        <label>2</label>
    </ligand>
</feature>
<feature type="binding site" evidence="4">
    <location>
        <begin position="60"/>
        <end position="61"/>
    </location>
    <ligand>
        <name>L-glutamate</name>
        <dbReference type="ChEBI" id="CHEBI:29985"/>
    </ligand>
</feature>
<feature type="binding site" evidence="2">
    <location>
        <position position="61"/>
    </location>
    <ligand>
        <name>L-glutamate</name>
        <dbReference type="ChEBI" id="CHEBI:29985"/>
    </ligand>
</feature>
<feature type="binding site" evidence="4">
    <location>
        <position position="65"/>
    </location>
    <ligand>
        <name>Mg(2+)</name>
        <dbReference type="ChEBI" id="CHEBI:18420"/>
        <label>1</label>
    </ligand>
</feature>
<feature type="binding site" evidence="4">
    <location>
        <begin position="67"/>
        <end position="69"/>
    </location>
    <ligand>
        <name>ATP</name>
        <dbReference type="ChEBI" id="CHEBI:30616"/>
    </ligand>
</feature>
<feature type="binding site" evidence="3">
    <location>
        <position position="69"/>
    </location>
    <ligand>
        <name>ATP</name>
        <dbReference type="ChEBI" id="CHEBI:30616"/>
    </ligand>
</feature>
<feature type="binding site" evidence="1">
    <location>
        <position position="117"/>
    </location>
    <ligand>
        <name>L-glutamate</name>
        <dbReference type="ChEBI" id="CHEBI:29985"/>
    </ligand>
</feature>
<feature type="non-terminal residue">
    <location>
        <position position="1"/>
    </location>
</feature>
<feature type="non-terminal residue">
    <location>
        <position position="119"/>
    </location>
</feature>
<reference key="1">
    <citation type="submission" date="1995-08" db="EMBL/GenBank/DDBJ databases">
        <authorList>
            <person name="Kramer J.G."/>
            <person name="Wyman M."/>
            <person name="Zehr J.P."/>
            <person name="Capone D.G."/>
        </authorList>
    </citation>
    <scope>NUCLEOTIDE SEQUENCE [GENOMIC DNA]</scope>
</reference>
<keyword id="KW-0067">ATP-binding</keyword>
<keyword id="KW-0963">Cytoplasm</keyword>
<keyword id="KW-0436">Ligase</keyword>
<keyword id="KW-0460">Magnesium</keyword>
<keyword id="KW-0479">Metal-binding</keyword>
<keyword id="KW-0547">Nucleotide-binding</keyword>
<dbReference type="EC" id="6.3.1.2" evidence="3"/>
<dbReference type="EMBL" id="U30820">
    <property type="protein sequence ID" value="AAA77684.1"/>
    <property type="molecule type" value="Genomic_DNA"/>
</dbReference>
<dbReference type="SMR" id="P51120"/>
<dbReference type="GO" id="GO:0005737">
    <property type="term" value="C:cytoplasm"/>
    <property type="evidence" value="ECO:0007669"/>
    <property type="project" value="UniProtKB-SubCell"/>
</dbReference>
<dbReference type="GO" id="GO:0016020">
    <property type="term" value="C:membrane"/>
    <property type="evidence" value="ECO:0007669"/>
    <property type="project" value="TreeGrafter"/>
</dbReference>
<dbReference type="GO" id="GO:0005524">
    <property type="term" value="F:ATP binding"/>
    <property type="evidence" value="ECO:0007669"/>
    <property type="project" value="UniProtKB-KW"/>
</dbReference>
<dbReference type="GO" id="GO:0004356">
    <property type="term" value="F:glutamine synthetase activity"/>
    <property type="evidence" value="ECO:0007669"/>
    <property type="project" value="UniProtKB-EC"/>
</dbReference>
<dbReference type="GO" id="GO:0046872">
    <property type="term" value="F:metal ion binding"/>
    <property type="evidence" value="ECO:0007669"/>
    <property type="project" value="UniProtKB-KW"/>
</dbReference>
<dbReference type="GO" id="GO:0006542">
    <property type="term" value="P:glutamine biosynthetic process"/>
    <property type="evidence" value="ECO:0007669"/>
    <property type="project" value="TreeGrafter"/>
</dbReference>
<dbReference type="GO" id="GO:0019740">
    <property type="term" value="P:nitrogen utilization"/>
    <property type="evidence" value="ECO:0007669"/>
    <property type="project" value="TreeGrafter"/>
</dbReference>
<dbReference type="Gene3D" id="3.30.590.10">
    <property type="entry name" value="Glutamine synthetase/guanido kinase, catalytic domain"/>
    <property type="match status" value="1"/>
</dbReference>
<dbReference type="InterPro" id="IPR014746">
    <property type="entry name" value="Gln_synth/guanido_kin_cat_dom"/>
</dbReference>
<dbReference type="InterPro" id="IPR008146">
    <property type="entry name" value="Gln_synth_cat_dom"/>
</dbReference>
<dbReference type="InterPro" id="IPR027303">
    <property type="entry name" value="Gln_synth_gly_rich_site"/>
</dbReference>
<dbReference type="PANTHER" id="PTHR43407">
    <property type="entry name" value="GLUTAMINE SYNTHETASE"/>
    <property type="match status" value="1"/>
</dbReference>
<dbReference type="PANTHER" id="PTHR43407:SF2">
    <property type="entry name" value="GLUTAMINE SYNTHETASE"/>
    <property type="match status" value="1"/>
</dbReference>
<dbReference type="Pfam" id="PF00120">
    <property type="entry name" value="Gln-synt_C"/>
    <property type="match status" value="1"/>
</dbReference>
<dbReference type="SMART" id="SM01230">
    <property type="entry name" value="Gln-synt_C"/>
    <property type="match status" value="1"/>
</dbReference>
<dbReference type="SUPFAM" id="SSF55931">
    <property type="entry name" value="Glutamine synthetase/guanido kinase"/>
    <property type="match status" value="1"/>
</dbReference>
<dbReference type="PROSITE" id="PS00181">
    <property type="entry name" value="GLNA_ATP"/>
    <property type="match status" value="1"/>
</dbReference>
<dbReference type="PROSITE" id="PS51987">
    <property type="entry name" value="GS_CATALYTIC"/>
    <property type="match status" value="1"/>
</dbReference>
<evidence type="ECO:0000250" key="1">
    <source>
        <dbReference type="UniProtKB" id="P0A1P6"/>
    </source>
</evidence>
<evidence type="ECO:0000250" key="2">
    <source>
        <dbReference type="UniProtKB" id="P12425"/>
    </source>
</evidence>
<evidence type="ECO:0000250" key="3">
    <source>
        <dbReference type="UniProtKB" id="P77961"/>
    </source>
</evidence>
<evidence type="ECO:0000250" key="4">
    <source>
        <dbReference type="UniProtKB" id="P9WN39"/>
    </source>
</evidence>
<evidence type="ECO:0000250" key="5">
    <source>
        <dbReference type="UniProtKB" id="Q3V5W6"/>
    </source>
</evidence>
<evidence type="ECO:0000255" key="6">
    <source>
        <dbReference type="PROSITE-ProRule" id="PRU01331"/>
    </source>
</evidence>
<organism>
    <name type="scientific">Trichodesmium thiebautii</name>
    <dbReference type="NCBI Taxonomy" id="1208"/>
    <lineage>
        <taxon>Bacteria</taxon>
        <taxon>Bacillati</taxon>
        <taxon>Cyanobacteriota</taxon>
        <taxon>Cyanophyceae</taxon>
        <taxon>Oscillatoriophycideae</taxon>
        <taxon>Oscillatoriales</taxon>
        <taxon>Microcoleaceae</taxon>
        <taxon>Trichodesmium</taxon>
    </lineage>
</organism>
<comment type="function">
    <text evidence="3">Involved in nitrogen metabolism via ammonium assimilation. Catalyzes the ATP-dependent biosynthesis of glutamine from glutamate and ammonia.</text>
</comment>
<comment type="catalytic activity">
    <reaction evidence="3">
        <text>L-glutamate + NH4(+) + ATP = L-glutamine + ADP + phosphate + H(+)</text>
        <dbReference type="Rhea" id="RHEA:16169"/>
        <dbReference type="ChEBI" id="CHEBI:15378"/>
        <dbReference type="ChEBI" id="CHEBI:28938"/>
        <dbReference type="ChEBI" id="CHEBI:29985"/>
        <dbReference type="ChEBI" id="CHEBI:30616"/>
        <dbReference type="ChEBI" id="CHEBI:43474"/>
        <dbReference type="ChEBI" id="CHEBI:58359"/>
        <dbReference type="ChEBI" id="CHEBI:456216"/>
        <dbReference type="EC" id="6.3.1.2"/>
    </reaction>
</comment>
<comment type="cofactor">
    <cofactor evidence="3">
        <name>Mg(2+)</name>
        <dbReference type="ChEBI" id="CHEBI:18420"/>
    </cofactor>
    <text evidence="3">Binds 2 Mg(2+) ions per subunit.</text>
</comment>
<comment type="activity regulation">
    <text evidence="5">The activity of this enzyme could be controlled by adenylation under conditions of abundant glutamine.</text>
</comment>
<comment type="subunit">
    <text evidence="3">Oligomer of 12 subunits arranged in the form of two hexagons.</text>
</comment>
<comment type="subcellular location">
    <subcellularLocation>
        <location evidence="4">Cytoplasm</location>
    </subcellularLocation>
</comment>
<comment type="similarity">
    <text evidence="3">Belongs to the glutamine synthetase family.</text>
</comment>
<gene>
    <name evidence="3" type="primary">glnA</name>
</gene>
<sequence>PIEKHHHEVATAGQNEIACQFNTLVKKADEIQVYKYVVHNVAHAYGQTATFMPKPLVGDNGSGMHCHQSISKDGVNIFAGDKYAGLSEEALYYIGGIIKHARAINAFRNASTNSYKRLS</sequence>
<protein>
    <recommendedName>
        <fullName evidence="3">Glutamine synthetase</fullName>
        <shortName evidence="3">GS</shortName>
        <ecNumber evidence="3">6.3.1.2</ecNumber>
    </recommendedName>
    <alternativeName>
        <fullName evidence="3">Glutamate--ammonia ligase</fullName>
    </alternativeName>
    <alternativeName>
        <fullName evidence="3">Glutamine synthetase I beta</fullName>
        <shortName evidence="3">GSI beta</shortName>
    </alternativeName>
</protein>